<protein>
    <recommendedName>
        <fullName evidence="4">Agnestins biosynthesis cluster transcription factor AgnL10</fullName>
    </recommendedName>
    <alternativeName>
        <fullName evidence="4">Agnestins biosynthesis cluster protein L10</fullName>
    </alternativeName>
</protein>
<feature type="chain" id="PRO_0000449022" description="Agnestins biosynthesis cluster transcription factor AgnL10">
    <location>
        <begin position="1"/>
        <end position="404"/>
    </location>
</feature>
<feature type="DNA-binding region" description="Zn(2)-C6 fungal-type" evidence="1">
    <location>
        <begin position="23"/>
        <end position="50"/>
    </location>
</feature>
<feature type="region of interest" description="Disordered" evidence="2">
    <location>
        <begin position="54"/>
        <end position="83"/>
    </location>
</feature>
<feature type="region of interest" description="Disordered" evidence="2">
    <location>
        <begin position="188"/>
        <end position="209"/>
    </location>
</feature>
<feature type="region of interest" description="Disordered" evidence="2">
    <location>
        <begin position="294"/>
        <end position="318"/>
    </location>
</feature>
<feature type="compositionally biased region" description="Basic residues" evidence="2">
    <location>
        <begin position="57"/>
        <end position="68"/>
    </location>
</feature>
<feature type="compositionally biased region" description="Polar residues" evidence="2">
    <location>
        <begin position="74"/>
        <end position="83"/>
    </location>
</feature>
<feature type="compositionally biased region" description="Low complexity" evidence="2">
    <location>
        <begin position="188"/>
        <end position="197"/>
    </location>
</feature>
<reference key="1">
    <citation type="journal article" date="2019" name="Chem. Sci.">
        <title>Characterisation of the biosynthetic pathway to agnestins A and B reveals the reductive route to chrysophanol in fungi.</title>
        <authorList>
            <person name="Szwalbe A.J."/>
            <person name="Williams K."/>
            <person name="Song Z."/>
            <person name="de Mattos-Shipley K."/>
            <person name="Vincent J.L."/>
            <person name="Bailey A.M."/>
            <person name="Willis C.L."/>
            <person name="Cox R.J."/>
            <person name="Simpson T.J."/>
        </authorList>
    </citation>
    <scope>NUCLEOTIDE SEQUENCE [GENOMIC DNA]</scope>
    <scope>FUNCTION</scope>
    <source>
        <strain>K5013</strain>
    </source>
</reference>
<name>AGN10_PAEDI</name>
<evidence type="ECO:0000255" key="1">
    <source>
        <dbReference type="PROSITE-ProRule" id="PRU00227"/>
    </source>
</evidence>
<evidence type="ECO:0000256" key="2">
    <source>
        <dbReference type="SAM" id="MobiDB-lite"/>
    </source>
</evidence>
<evidence type="ECO:0000269" key="3">
    <source>
    </source>
</evidence>
<evidence type="ECO:0000303" key="4">
    <source>
    </source>
</evidence>
<gene>
    <name evidence="4" type="primary">Agn10</name>
</gene>
<proteinExistence type="inferred from homology"/>
<keyword id="KW-0238">DNA-binding</keyword>
<keyword id="KW-0479">Metal-binding</keyword>
<keyword id="KW-0539">Nucleus</keyword>
<keyword id="KW-0804">Transcription</keyword>
<keyword id="KW-0805">Transcription regulation</keyword>
<keyword id="KW-0862">Zinc</keyword>
<organism>
    <name type="scientific">Paecilomyces divaricatus</name>
    <name type="common">Penicillium divaricatum</name>
    <dbReference type="NCBI Taxonomy" id="644132"/>
    <lineage>
        <taxon>Eukaryota</taxon>
        <taxon>Fungi</taxon>
        <taxon>Dikarya</taxon>
        <taxon>Ascomycota</taxon>
        <taxon>Pezizomycotina</taxon>
        <taxon>Eurotiomycetes</taxon>
        <taxon>Eurotiomycetidae</taxon>
        <taxon>Eurotiales</taxon>
        <taxon>Thermoascaceae</taxon>
        <taxon>Paecilomyces</taxon>
    </lineage>
</organism>
<accession>A0A411PQP1</accession>
<dbReference type="EMBL" id="MH898872">
    <property type="protein sequence ID" value="QBG38878.1"/>
    <property type="molecule type" value="Genomic_DNA"/>
</dbReference>
<dbReference type="SMR" id="A0A411PQP1"/>
<dbReference type="GO" id="GO:0005634">
    <property type="term" value="C:nucleus"/>
    <property type="evidence" value="ECO:0007669"/>
    <property type="project" value="UniProtKB-SubCell"/>
</dbReference>
<dbReference type="GO" id="GO:0003677">
    <property type="term" value="F:DNA binding"/>
    <property type="evidence" value="ECO:0007669"/>
    <property type="project" value="UniProtKB-KW"/>
</dbReference>
<dbReference type="GO" id="GO:0000981">
    <property type="term" value="F:DNA-binding transcription factor activity, RNA polymerase II-specific"/>
    <property type="evidence" value="ECO:0007669"/>
    <property type="project" value="InterPro"/>
</dbReference>
<dbReference type="GO" id="GO:0008270">
    <property type="term" value="F:zinc ion binding"/>
    <property type="evidence" value="ECO:0007669"/>
    <property type="project" value="InterPro"/>
</dbReference>
<dbReference type="GO" id="GO:0045122">
    <property type="term" value="P:aflatoxin biosynthetic process"/>
    <property type="evidence" value="ECO:0007669"/>
    <property type="project" value="InterPro"/>
</dbReference>
<dbReference type="CDD" id="cd00067">
    <property type="entry name" value="GAL4"/>
    <property type="match status" value="1"/>
</dbReference>
<dbReference type="Gene3D" id="4.10.240.10">
    <property type="entry name" value="Zn(2)-C6 fungal-type DNA-binding domain"/>
    <property type="match status" value="1"/>
</dbReference>
<dbReference type="InterPro" id="IPR013700">
    <property type="entry name" value="AflR"/>
</dbReference>
<dbReference type="InterPro" id="IPR050675">
    <property type="entry name" value="OAF3"/>
</dbReference>
<dbReference type="InterPro" id="IPR036864">
    <property type="entry name" value="Zn2-C6_fun-type_DNA-bd_sf"/>
</dbReference>
<dbReference type="InterPro" id="IPR001138">
    <property type="entry name" value="Zn2Cys6_DnaBD"/>
</dbReference>
<dbReference type="PANTHER" id="PTHR31069:SF31">
    <property type="entry name" value="MONODICTYPHENONE CLUSTER TRANSCRIPTION FACTOR-RELATED"/>
    <property type="match status" value="1"/>
</dbReference>
<dbReference type="PANTHER" id="PTHR31069">
    <property type="entry name" value="OLEATE-ACTIVATED TRANSCRIPTION FACTOR 1-RELATED"/>
    <property type="match status" value="1"/>
</dbReference>
<dbReference type="Pfam" id="PF08493">
    <property type="entry name" value="AflR"/>
    <property type="match status" value="1"/>
</dbReference>
<dbReference type="Pfam" id="PF00172">
    <property type="entry name" value="Zn_clus"/>
    <property type="match status" value="1"/>
</dbReference>
<dbReference type="PRINTS" id="PR00755">
    <property type="entry name" value="AFLATOXINBRP"/>
</dbReference>
<dbReference type="SMART" id="SM00066">
    <property type="entry name" value="GAL4"/>
    <property type="match status" value="1"/>
</dbReference>
<dbReference type="SUPFAM" id="SSF57701">
    <property type="entry name" value="Zn2/Cys6 DNA-binding domain"/>
    <property type="match status" value="1"/>
</dbReference>
<dbReference type="PROSITE" id="PS00463">
    <property type="entry name" value="ZN2_CY6_FUNGAL_1"/>
    <property type="match status" value="1"/>
</dbReference>
<dbReference type="PROSITE" id="PS50048">
    <property type="entry name" value="ZN2_CY6_FUNGAL_2"/>
    <property type="match status" value="1"/>
</dbReference>
<sequence>MQFPLASAHEDSPPAGLKLRDSCNRCAVSKIKCSKEKPACARCAKQDKVCEYSATKRAGRKRGSRRHNNPVPSPTTQDLPTAAPSTCPTFLEDPETIPLSPRPPFESYPDLFPGIFSIGDDPLIATPITLDTFSFPFDSFSASPISLPTLDVSDGDHLPDAVPLNHLNHPGDRTDVARATALLASDHASASSMDPAAGPQRPPDEPSSGPICGFIRALGLLNGLSSPAWPTSHHPGLDPRPSSRSIMAENEQTVRAISEMLHCQCFDDGYLLAILSMLILKVLSSYATLLRQTPGPDGDGVSWDNSTPPPGEQGAGVDGEDHCRTIAQQILGQLHRVQRLVSILSQRFNIPGGRARTPDSTAGPDLLSSIETLFPVPGSMLEQMEGLLRKRLRTLSAEIVDILR</sequence>
<comment type="function">
    <text evidence="3">Transcription factor that regulates the expression of the gene cluster that mediates the biosynthesis of agnestins, dihydroxy-xanthone metabolites.</text>
</comment>
<comment type="subcellular location">
    <subcellularLocation>
        <location evidence="1">Nucleus</location>
    </subcellularLocation>
</comment>